<gene>
    <name type="primary">MYOG</name>
</gene>
<comment type="function">
    <text evidence="1">Acts as a transcriptional activator that promotes transcription of muscle-specific target genes and plays a role in muscle differentiation. Induces fibroblasts to differentiate into myoblasts. Probable sequence specific DNA-binding protein (By similarity).</text>
</comment>
<comment type="subunit">
    <text evidence="1">Homodimer and heterodimer. Efficient DNA binding requires dimerization with another bHLH protein (By similarity).</text>
</comment>
<comment type="subcellular location">
    <subcellularLocation>
        <location evidence="2">Nucleus</location>
    </subcellularLocation>
</comment>
<accession>P17920</accession>
<name>MYOG_CHICK</name>
<dbReference type="EMBL" id="D90157">
    <property type="protein sequence ID" value="BAA14188.1"/>
    <property type="molecule type" value="mRNA"/>
</dbReference>
<dbReference type="PIR" id="B35882">
    <property type="entry name" value="B35882"/>
</dbReference>
<dbReference type="RefSeq" id="NP_989515.1">
    <property type="nucleotide sequence ID" value="NM_204184.2"/>
</dbReference>
<dbReference type="SMR" id="P17920"/>
<dbReference type="FunCoup" id="P17920">
    <property type="interactions" value="99"/>
</dbReference>
<dbReference type="STRING" id="9031.ENSGALP00000039912"/>
<dbReference type="PaxDb" id="9031-ENSGALP00000039912"/>
<dbReference type="GeneID" id="374004"/>
<dbReference type="KEGG" id="gga:374004"/>
<dbReference type="CTD" id="4656"/>
<dbReference type="VEuPathDB" id="HostDB:geneid_374004"/>
<dbReference type="eggNOG" id="KOG3960">
    <property type="taxonomic scope" value="Eukaryota"/>
</dbReference>
<dbReference type="HOGENOM" id="CLU_100258_0_0_1"/>
<dbReference type="InParanoid" id="P17920"/>
<dbReference type="OMA" id="QELGGWW"/>
<dbReference type="OrthoDB" id="10049614at2759"/>
<dbReference type="PhylomeDB" id="P17920"/>
<dbReference type="Reactome" id="R-GGA-525793">
    <property type="pathway name" value="Myogenesis"/>
</dbReference>
<dbReference type="PRO" id="PR:P17920"/>
<dbReference type="Proteomes" id="UP000000539">
    <property type="component" value="Chromosome 26"/>
</dbReference>
<dbReference type="Bgee" id="ENSGALG00000000172">
    <property type="expression patterns" value="Expressed in skeletal muscle tissue"/>
</dbReference>
<dbReference type="GO" id="GO:0005634">
    <property type="term" value="C:nucleus"/>
    <property type="evidence" value="ECO:0000250"/>
    <property type="project" value="UniProtKB"/>
</dbReference>
<dbReference type="GO" id="GO:0032993">
    <property type="term" value="C:protein-DNA complex"/>
    <property type="evidence" value="ECO:0000250"/>
    <property type="project" value="UniProtKB"/>
</dbReference>
<dbReference type="GO" id="GO:0005667">
    <property type="term" value="C:transcription regulator complex"/>
    <property type="evidence" value="ECO:0000314"/>
    <property type="project" value="BHF-UCL"/>
</dbReference>
<dbReference type="GO" id="GO:0043425">
    <property type="term" value="F:bHLH transcription factor binding"/>
    <property type="evidence" value="ECO:0000353"/>
    <property type="project" value="BHF-UCL"/>
</dbReference>
<dbReference type="GO" id="GO:0001216">
    <property type="term" value="F:DNA-binding transcription activator activity"/>
    <property type="evidence" value="ECO:0000250"/>
    <property type="project" value="UniProtKB"/>
</dbReference>
<dbReference type="GO" id="GO:0003700">
    <property type="term" value="F:DNA-binding transcription factor activity"/>
    <property type="evidence" value="ECO:0000250"/>
    <property type="project" value="UniProtKB"/>
</dbReference>
<dbReference type="GO" id="GO:0000981">
    <property type="term" value="F:DNA-binding transcription factor activity, RNA polymerase II-specific"/>
    <property type="evidence" value="ECO:0000318"/>
    <property type="project" value="GO_Central"/>
</dbReference>
<dbReference type="GO" id="GO:0070888">
    <property type="term" value="F:E-box binding"/>
    <property type="evidence" value="ECO:0000314"/>
    <property type="project" value="BHF-UCL"/>
</dbReference>
<dbReference type="GO" id="GO:0042802">
    <property type="term" value="F:identical protein binding"/>
    <property type="evidence" value="ECO:0000353"/>
    <property type="project" value="BHF-UCL"/>
</dbReference>
<dbReference type="GO" id="GO:0046983">
    <property type="term" value="F:protein dimerization activity"/>
    <property type="evidence" value="ECO:0007669"/>
    <property type="project" value="InterPro"/>
</dbReference>
<dbReference type="GO" id="GO:0000978">
    <property type="term" value="F:RNA polymerase II cis-regulatory region sequence-specific DNA binding"/>
    <property type="evidence" value="ECO:0000318"/>
    <property type="project" value="GO_Central"/>
</dbReference>
<dbReference type="GO" id="GO:0071392">
    <property type="term" value="P:cellular response to estradiol stimulus"/>
    <property type="evidence" value="ECO:0000250"/>
    <property type="project" value="UniProtKB"/>
</dbReference>
<dbReference type="GO" id="GO:0042693">
    <property type="term" value="P:muscle cell fate commitment"/>
    <property type="evidence" value="ECO:0000314"/>
    <property type="project" value="BHF-UCL"/>
</dbReference>
<dbReference type="GO" id="GO:0045445">
    <property type="term" value="P:myoblast differentiation"/>
    <property type="evidence" value="ECO:0000315"/>
    <property type="project" value="AgBase"/>
</dbReference>
<dbReference type="GO" id="GO:0008285">
    <property type="term" value="P:negative regulation of cell population proliferation"/>
    <property type="evidence" value="ECO:0000250"/>
    <property type="project" value="UniProtKB"/>
</dbReference>
<dbReference type="GO" id="GO:0014737">
    <property type="term" value="P:positive regulation of muscle atrophy"/>
    <property type="evidence" value="ECO:0000250"/>
    <property type="project" value="UniProtKB"/>
</dbReference>
<dbReference type="GO" id="GO:0045663">
    <property type="term" value="P:positive regulation of myoblast differentiation"/>
    <property type="evidence" value="ECO:0000250"/>
    <property type="project" value="UniProtKB"/>
</dbReference>
<dbReference type="GO" id="GO:0010831">
    <property type="term" value="P:positive regulation of myotube differentiation"/>
    <property type="evidence" value="ECO:0000250"/>
    <property type="project" value="UniProtKB"/>
</dbReference>
<dbReference type="GO" id="GO:0048743">
    <property type="term" value="P:positive regulation of skeletal muscle fiber development"/>
    <property type="evidence" value="ECO:0000250"/>
    <property type="project" value="UniProtKB"/>
</dbReference>
<dbReference type="GO" id="GO:0045944">
    <property type="term" value="P:positive regulation of transcription by RNA polymerase II"/>
    <property type="evidence" value="ECO:0000314"/>
    <property type="project" value="BHF-UCL"/>
</dbReference>
<dbReference type="GO" id="GO:0051726">
    <property type="term" value="P:regulation of cell cycle"/>
    <property type="evidence" value="ECO:0000250"/>
    <property type="project" value="UniProtKB"/>
</dbReference>
<dbReference type="GO" id="GO:1901739">
    <property type="term" value="P:regulation of myoblast fusion"/>
    <property type="evidence" value="ECO:0000250"/>
    <property type="project" value="UniProtKB"/>
</dbReference>
<dbReference type="GO" id="GO:0014842">
    <property type="term" value="P:regulation of skeletal muscle satellite cell proliferation"/>
    <property type="evidence" value="ECO:0000250"/>
    <property type="project" value="UniProtKB"/>
</dbReference>
<dbReference type="GO" id="GO:0014894">
    <property type="term" value="P:response to denervation involved in regulation of muscle adaptation"/>
    <property type="evidence" value="ECO:0000250"/>
    <property type="project" value="UniProtKB"/>
</dbReference>
<dbReference type="GO" id="GO:0014878">
    <property type="term" value="P:response to electrical stimulus involved in regulation of muscle adaptation"/>
    <property type="evidence" value="ECO:0000250"/>
    <property type="project" value="UniProtKB"/>
</dbReference>
<dbReference type="GO" id="GO:0014873">
    <property type="term" value="P:response to muscle activity involved in regulation of muscle adaptation"/>
    <property type="evidence" value="ECO:0000250"/>
    <property type="project" value="UniProtKB"/>
</dbReference>
<dbReference type="GO" id="GO:0035914">
    <property type="term" value="P:skeletal muscle cell differentiation"/>
    <property type="evidence" value="ECO:0000318"/>
    <property type="project" value="GO_Central"/>
</dbReference>
<dbReference type="GO" id="GO:0014891">
    <property type="term" value="P:striated muscle atrophy"/>
    <property type="evidence" value="ECO:0000250"/>
    <property type="project" value="UniProtKB"/>
</dbReference>
<dbReference type="GO" id="GO:0060290">
    <property type="term" value="P:transdifferentiation"/>
    <property type="evidence" value="ECO:0000315"/>
    <property type="project" value="AgBase"/>
</dbReference>
<dbReference type="FunFam" id="4.10.280.10:FF:000005">
    <property type="entry name" value="Myogenic factor"/>
    <property type="match status" value="1"/>
</dbReference>
<dbReference type="Gene3D" id="4.10.280.10">
    <property type="entry name" value="Helix-loop-helix DNA-binding domain"/>
    <property type="match status" value="1"/>
</dbReference>
<dbReference type="InterPro" id="IPR011598">
    <property type="entry name" value="bHLH_dom"/>
</dbReference>
<dbReference type="InterPro" id="IPR036638">
    <property type="entry name" value="HLH_DNA-bd_sf"/>
</dbReference>
<dbReference type="InterPro" id="IPR002546">
    <property type="entry name" value="MyoD_N"/>
</dbReference>
<dbReference type="InterPro" id="IPR039704">
    <property type="entry name" value="Myogenic_factor"/>
</dbReference>
<dbReference type="PANTHER" id="PTHR11534">
    <property type="entry name" value="MYOGENIC FACTOR"/>
    <property type="match status" value="1"/>
</dbReference>
<dbReference type="PANTHER" id="PTHR11534:SF5">
    <property type="entry name" value="MYOGENIN"/>
    <property type="match status" value="1"/>
</dbReference>
<dbReference type="Pfam" id="PF01586">
    <property type="entry name" value="Basic"/>
    <property type="match status" value="1"/>
</dbReference>
<dbReference type="Pfam" id="PF00010">
    <property type="entry name" value="HLH"/>
    <property type="match status" value="1"/>
</dbReference>
<dbReference type="SMART" id="SM00520">
    <property type="entry name" value="BASIC"/>
    <property type="match status" value="1"/>
</dbReference>
<dbReference type="SMART" id="SM00353">
    <property type="entry name" value="HLH"/>
    <property type="match status" value="1"/>
</dbReference>
<dbReference type="SUPFAM" id="SSF47459">
    <property type="entry name" value="HLH, helix-loop-helix DNA-binding domain"/>
    <property type="match status" value="1"/>
</dbReference>
<dbReference type="PROSITE" id="PS50888">
    <property type="entry name" value="BHLH"/>
    <property type="match status" value="1"/>
</dbReference>
<evidence type="ECO:0000250" key="1"/>
<evidence type="ECO:0000255" key="2">
    <source>
        <dbReference type="PROSITE-ProRule" id="PRU00981"/>
    </source>
</evidence>
<evidence type="ECO:0000256" key="3">
    <source>
        <dbReference type="SAM" id="MobiDB-lite"/>
    </source>
</evidence>
<keyword id="KW-0010">Activator</keyword>
<keyword id="KW-0217">Developmental protein</keyword>
<keyword id="KW-0221">Differentiation</keyword>
<keyword id="KW-0238">DNA-binding</keyword>
<keyword id="KW-0517">Myogenesis</keyword>
<keyword id="KW-0539">Nucleus</keyword>
<keyword id="KW-1185">Reference proteome</keyword>
<keyword id="KW-0804">Transcription</keyword>
<keyword id="KW-0805">Transcription regulation</keyword>
<reference key="1">
    <citation type="journal article" date="1990" name="J. Biol. Chem.">
        <title>Myogenin contains two domains conserved among myogenic factors.</title>
        <authorList>
            <person name="Fujisawa-Sehara A."/>
            <person name="Nabeshima Y."/>
            <person name="Hosoda Y."/>
            <person name="Obinata T."/>
            <person name="Nabeshima Y."/>
        </authorList>
    </citation>
    <scope>NUCLEOTIDE SEQUENCE [MRNA]</scope>
    <source>
        <tissue>Pectoralis muscle</tissue>
    </source>
</reference>
<sequence length="227" mass="25854">MELFETNPYFFPEQRFYDGENFLGSRLQGYEAAAFPERPEVTLCPESRGALEEKDSTLPEHCPGQCLPWACKICKRKTVSIDRRRAATLREKRRLKKVNEAFEALKRSTLLNPNQRLPKVEILRSAIQYIERLQSLLSSLNQQEREQRELRYRPAAPQPAAPSECGSGSSSCSPEWSTQLEFGTNPADHLLSDDQAEDRNLHSLSSIVESIAVEDVAVTFPEERVQN</sequence>
<organism>
    <name type="scientific">Gallus gallus</name>
    <name type="common">Chicken</name>
    <dbReference type="NCBI Taxonomy" id="9031"/>
    <lineage>
        <taxon>Eukaryota</taxon>
        <taxon>Metazoa</taxon>
        <taxon>Chordata</taxon>
        <taxon>Craniata</taxon>
        <taxon>Vertebrata</taxon>
        <taxon>Euteleostomi</taxon>
        <taxon>Archelosauria</taxon>
        <taxon>Archosauria</taxon>
        <taxon>Dinosauria</taxon>
        <taxon>Saurischia</taxon>
        <taxon>Theropoda</taxon>
        <taxon>Coelurosauria</taxon>
        <taxon>Aves</taxon>
        <taxon>Neognathae</taxon>
        <taxon>Galloanserae</taxon>
        <taxon>Galliformes</taxon>
        <taxon>Phasianidae</taxon>
        <taxon>Phasianinae</taxon>
        <taxon>Gallus</taxon>
    </lineage>
</organism>
<protein>
    <recommendedName>
        <fullName>Myogenin</fullName>
    </recommendedName>
    <alternativeName>
        <fullName>Myogenic factor</fullName>
    </alternativeName>
</protein>
<feature type="chain" id="PRO_0000127379" description="Myogenin">
    <location>
        <begin position="1"/>
        <end position="227"/>
    </location>
</feature>
<feature type="domain" description="bHLH" evidence="2">
    <location>
        <begin position="82"/>
        <end position="133"/>
    </location>
</feature>
<feature type="region of interest" description="Disordered" evidence="3">
    <location>
        <begin position="147"/>
        <end position="196"/>
    </location>
</feature>
<feature type="compositionally biased region" description="Low complexity" evidence="3">
    <location>
        <begin position="161"/>
        <end position="175"/>
    </location>
</feature>
<proteinExistence type="evidence at transcript level"/>